<accession>B0U151</accession>
<proteinExistence type="inferred from homology"/>
<name>HEM6_FRAP2</name>
<comment type="function">
    <text evidence="1">Involved in the heme biosynthesis. Catalyzes the aerobic oxidative decarboxylation of propionate groups of rings A and B of coproporphyrinogen-III to yield the vinyl groups in protoporphyrinogen-IX.</text>
</comment>
<comment type="catalytic activity">
    <reaction evidence="1">
        <text>coproporphyrinogen III + O2 + 2 H(+) = protoporphyrinogen IX + 2 CO2 + 2 H2O</text>
        <dbReference type="Rhea" id="RHEA:18257"/>
        <dbReference type="ChEBI" id="CHEBI:15377"/>
        <dbReference type="ChEBI" id="CHEBI:15378"/>
        <dbReference type="ChEBI" id="CHEBI:15379"/>
        <dbReference type="ChEBI" id="CHEBI:16526"/>
        <dbReference type="ChEBI" id="CHEBI:57307"/>
        <dbReference type="ChEBI" id="CHEBI:57309"/>
        <dbReference type="EC" id="1.3.3.3"/>
    </reaction>
</comment>
<comment type="cofactor">
    <cofactor evidence="1">
        <name>a divalent metal cation</name>
        <dbReference type="ChEBI" id="CHEBI:60240"/>
    </cofactor>
</comment>
<comment type="pathway">
    <text evidence="1">Porphyrin-containing compound metabolism; protoporphyrin-IX biosynthesis; protoporphyrinogen-IX from coproporphyrinogen-III (O2 route): step 1/1.</text>
</comment>
<comment type="subunit">
    <text evidence="1">Homodimer.</text>
</comment>
<comment type="subcellular location">
    <subcellularLocation>
        <location evidence="1">Cytoplasm</location>
    </subcellularLocation>
</comment>
<comment type="similarity">
    <text evidence="1">Belongs to the aerobic coproporphyrinogen-III oxidase family.</text>
</comment>
<organism>
    <name type="scientific">Francisella philomiragia subsp. philomiragia (strain ATCC 25017 / CCUG 19701 / FSC 153 / O#319-036)</name>
    <dbReference type="NCBI Taxonomy" id="484022"/>
    <lineage>
        <taxon>Bacteria</taxon>
        <taxon>Pseudomonadati</taxon>
        <taxon>Pseudomonadota</taxon>
        <taxon>Gammaproteobacteria</taxon>
        <taxon>Thiotrichales</taxon>
        <taxon>Francisellaceae</taxon>
        <taxon>Francisella</taxon>
    </lineage>
</organism>
<protein>
    <recommendedName>
        <fullName evidence="1">Oxygen-dependent coproporphyrinogen-III oxidase</fullName>
        <shortName evidence="1">CPO</shortName>
        <shortName evidence="1">Coprogen oxidase</shortName>
        <shortName evidence="1">Coproporphyrinogenase</shortName>
        <ecNumber evidence="1">1.3.3.3</ecNumber>
    </recommendedName>
</protein>
<evidence type="ECO:0000255" key="1">
    <source>
        <dbReference type="HAMAP-Rule" id="MF_00333"/>
    </source>
</evidence>
<dbReference type="EC" id="1.3.3.3" evidence="1"/>
<dbReference type="EMBL" id="CP000937">
    <property type="protein sequence ID" value="ABZ88070.1"/>
    <property type="molecule type" value="Genomic_DNA"/>
</dbReference>
<dbReference type="SMR" id="B0U151"/>
<dbReference type="KEGG" id="fph:Fphi_1842"/>
<dbReference type="eggNOG" id="COG0408">
    <property type="taxonomic scope" value="Bacteria"/>
</dbReference>
<dbReference type="HOGENOM" id="CLU_026169_0_1_6"/>
<dbReference type="UniPathway" id="UPA00251">
    <property type="reaction ID" value="UER00322"/>
</dbReference>
<dbReference type="GO" id="GO:0005737">
    <property type="term" value="C:cytoplasm"/>
    <property type="evidence" value="ECO:0007669"/>
    <property type="project" value="UniProtKB-SubCell"/>
</dbReference>
<dbReference type="GO" id="GO:0004109">
    <property type="term" value="F:coproporphyrinogen oxidase activity"/>
    <property type="evidence" value="ECO:0007669"/>
    <property type="project" value="UniProtKB-UniRule"/>
</dbReference>
<dbReference type="GO" id="GO:0046872">
    <property type="term" value="F:metal ion binding"/>
    <property type="evidence" value="ECO:0007669"/>
    <property type="project" value="UniProtKB-KW"/>
</dbReference>
<dbReference type="GO" id="GO:0042803">
    <property type="term" value="F:protein homodimerization activity"/>
    <property type="evidence" value="ECO:0000250"/>
    <property type="project" value="UniProtKB"/>
</dbReference>
<dbReference type="GO" id="GO:0006782">
    <property type="term" value="P:protoporphyrinogen IX biosynthetic process"/>
    <property type="evidence" value="ECO:0007669"/>
    <property type="project" value="UniProtKB-UniRule"/>
</dbReference>
<dbReference type="Gene3D" id="3.40.1500.10">
    <property type="entry name" value="Coproporphyrinogen III oxidase, aerobic"/>
    <property type="match status" value="1"/>
</dbReference>
<dbReference type="HAMAP" id="MF_00333">
    <property type="entry name" value="Coprogen_oxidas"/>
    <property type="match status" value="1"/>
</dbReference>
<dbReference type="InterPro" id="IPR001260">
    <property type="entry name" value="Coprogen_oxidase_aer"/>
</dbReference>
<dbReference type="InterPro" id="IPR036406">
    <property type="entry name" value="Coprogen_oxidase_aer_sf"/>
</dbReference>
<dbReference type="NCBIfam" id="NF003727">
    <property type="entry name" value="PRK05330.1"/>
    <property type="match status" value="1"/>
</dbReference>
<dbReference type="PANTHER" id="PTHR10755">
    <property type="entry name" value="COPROPORPHYRINOGEN III OXIDASE, MITOCHONDRIAL"/>
    <property type="match status" value="1"/>
</dbReference>
<dbReference type="PANTHER" id="PTHR10755:SF0">
    <property type="entry name" value="OXYGEN-DEPENDENT COPROPORPHYRINOGEN-III OXIDASE, MITOCHONDRIAL"/>
    <property type="match status" value="1"/>
</dbReference>
<dbReference type="Pfam" id="PF01218">
    <property type="entry name" value="Coprogen_oxidas"/>
    <property type="match status" value="1"/>
</dbReference>
<dbReference type="PIRSF" id="PIRSF000166">
    <property type="entry name" value="Coproporphyri_ox"/>
    <property type="match status" value="1"/>
</dbReference>
<dbReference type="PRINTS" id="PR00073">
    <property type="entry name" value="COPRGNOXDASE"/>
</dbReference>
<dbReference type="SUPFAM" id="SSF102886">
    <property type="entry name" value="Coproporphyrinogen III oxidase"/>
    <property type="match status" value="1"/>
</dbReference>
<gene>
    <name evidence="1" type="primary">hemF</name>
    <name type="ordered locus">Fphi_1842</name>
</gene>
<sequence length="308" mass="35612">MQEKITQFENFLAQLQQKITSTLEQSETSSAKFISDKWQKPDTPEQKLKGYGNSMIIEGGEIFEKGVVAFSRVHGDALPPSATAKRQELAGKSFIATGVSLVIHPRNPFVPTSHANFRIFVAGADTDNPIWWFGGGFDLTPYYPFEEDAIHWHQTAKNICDKHDASYYPSFKKLCDEYFYLKHRDECRGVGGLFFDDLNDKSFDECFKFVTDCANSYLDAYIPIVEKRKNIEYSQKHKDFQLYRRGRYVEFNLVFDRGTIFGLQSGGRTESILSSMPPMATWKYNWQPEPGSEEEKVYEYIKPRDWIK</sequence>
<feature type="chain" id="PRO_1000133180" description="Oxygen-dependent coproporphyrinogen-III oxidase">
    <location>
        <begin position="1"/>
        <end position="308"/>
    </location>
</feature>
<feature type="region of interest" description="Important for dimerization" evidence="1">
    <location>
        <begin position="248"/>
        <end position="283"/>
    </location>
</feature>
<feature type="active site" description="Proton donor" evidence="1">
    <location>
        <position position="114"/>
    </location>
</feature>
<feature type="binding site" evidence="1">
    <location>
        <position position="100"/>
    </location>
    <ligand>
        <name>substrate</name>
    </ligand>
</feature>
<feature type="binding site" evidence="1">
    <location>
        <position position="104"/>
    </location>
    <ligand>
        <name>a divalent metal cation</name>
        <dbReference type="ChEBI" id="CHEBI:60240"/>
    </ligand>
</feature>
<feature type="binding site" evidence="1">
    <location>
        <position position="114"/>
    </location>
    <ligand>
        <name>a divalent metal cation</name>
        <dbReference type="ChEBI" id="CHEBI:60240"/>
    </ligand>
</feature>
<feature type="binding site" evidence="1">
    <location>
        <begin position="116"/>
        <end position="118"/>
    </location>
    <ligand>
        <name>substrate</name>
    </ligand>
</feature>
<feature type="binding site" evidence="1">
    <location>
        <position position="153"/>
    </location>
    <ligand>
        <name>a divalent metal cation</name>
        <dbReference type="ChEBI" id="CHEBI:60240"/>
    </ligand>
</feature>
<feature type="binding site" evidence="1">
    <location>
        <position position="183"/>
    </location>
    <ligand>
        <name>a divalent metal cation</name>
        <dbReference type="ChEBI" id="CHEBI:60240"/>
    </ligand>
</feature>
<feature type="binding site" evidence="1">
    <location>
        <begin position="266"/>
        <end position="268"/>
    </location>
    <ligand>
        <name>substrate</name>
    </ligand>
</feature>
<feature type="site" description="Important for dimerization" evidence="1">
    <location>
        <position position="183"/>
    </location>
</feature>
<reference key="1">
    <citation type="submission" date="2007-12" db="EMBL/GenBank/DDBJ databases">
        <title>Complete sequence of chromosome of Francisella philomiragia subsp. philomiragia ATCC 25017.</title>
        <authorList>
            <consortium name="US DOE Joint Genome Institute"/>
            <person name="Copeland A."/>
            <person name="Lucas S."/>
            <person name="Lapidus A."/>
            <person name="Barry K."/>
            <person name="Detter J.C."/>
            <person name="Glavina del Rio T."/>
            <person name="Hammon N."/>
            <person name="Israni S."/>
            <person name="Dalin E."/>
            <person name="Tice H."/>
            <person name="Pitluck S."/>
            <person name="Chain P."/>
            <person name="Malfatti S."/>
            <person name="Shin M."/>
            <person name="Vergez L."/>
            <person name="Schmutz J."/>
            <person name="Larimer F."/>
            <person name="Land M."/>
            <person name="Hauser L."/>
            <person name="Richardson P."/>
        </authorList>
    </citation>
    <scope>NUCLEOTIDE SEQUENCE [LARGE SCALE GENOMIC DNA]</scope>
    <source>
        <strain>ATCC 25017 / CCUG 19701 / FSC 153 / O#319-036</strain>
    </source>
</reference>
<keyword id="KW-0963">Cytoplasm</keyword>
<keyword id="KW-0350">Heme biosynthesis</keyword>
<keyword id="KW-0479">Metal-binding</keyword>
<keyword id="KW-0560">Oxidoreductase</keyword>
<keyword id="KW-0627">Porphyrin biosynthesis</keyword>